<proteinExistence type="inferred from homology"/>
<dbReference type="EC" id="2.4.2.7" evidence="1"/>
<dbReference type="EMBL" id="CP000109">
    <property type="protein sequence ID" value="ABB40704.1"/>
    <property type="status" value="ALT_INIT"/>
    <property type="molecule type" value="Genomic_DNA"/>
</dbReference>
<dbReference type="SMR" id="Q31JG9"/>
<dbReference type="STRING" id="317025.Tcr_0108"/>
<dbReference type="KEGG" id="tcx:Tcr_0108"/>
<dbReference type="eggNOG" id="COG0503">
    <property type="taxonomic scope" value="Bacteria"/>
</dbReference>
<dbReference type="HOGENOM" id="CLU_063339_3_3_6"/>
<dbReference type="OrthoDB" id="9803963at2"/>
<dbReference type="UniPathway" id="UPA00588">
    <property type="reaction ID" value="UER00646"/>
</dbReference>
<dbReference type="GO" id="GO:0005737">
    <property type="term" value="C:cytoplasm"/>
    <property type="evidence" value="ECO:0007669"/>
    <property type="project" value="UniProtKB-SubCell"/>
</dbReference>
<dbReference type="GO" id="GO:0002055">
    <property type="term" value="F:adenine binding"/>
    <property type="evidence" value="ECO:0007669"/>
    <property type="project" value="TreeGrafter"/>
</dbReference>
<dbReference type="GO" id="GO:0003999">
    <property type="term" value="F:adenine phosphoribosyltransferase activity"/>
    <property type="evidence" value="ECO:0007669"/>
    <property type="project" value="UniProtKB-UniRule"/>
</dbReference>
<dbReference type="GO" id="GO:0016208">
    <property type="term" value="F:AMP binding"/>
    <property type="evidence" value="ECO:0007669"/>
    <property type="project" value="TreeGrafter"/>
</dbReference>
<dbReference type="GO" id="GO:0006168">
    <property type="term" value="P:adenine salvage"/>
    <property type="evidence" value="ECO:0007669"/>
    <property type="project" value="InterPro"/>
</dbReference>
<dbReference type="GO" id="GO:0044209">
    <property type="term" value="P:AMP salvage"/>
    <property type="evidence" value="ECO:0007669"/>
    <property type="project" value="UniProtKB-UniRule"/>
</dbReference>
<dbReference type="GO" id="GO:0006166">
    <property type="term" value="P:purine ribonucleoside salvage"/>
    <property type="evidence" value="ECO:0007669"/>
    <property type="project" value="UniProtKB-KW"/>
</dbReference>
<dbReference type="CDD" id="cd06223">
    <property type="entry name" value="PRTases_typeI"/>
    <property type="match status" value="1"/>
</dbReference>
<dbReference type="FunFam" id="3.40.50.2020:FF:000004">
    <property type="entry name" value="Adenine phosphoribosyltransferase"/>
    <property type="match status" value="1"/>
</dbReference>
<dbReference type="Gene3D" id="3.40.50.2020">
    <property type="match status" value="1"/>
</dbReference>
<dbReference type="HAMAP" id="MF_00004">
    <property type="entry name" value="Aden_phosphoribosyltr"/>
    <property type="match status" value="1"/>
</dbReference>
<dbReference type="InterPro" id="IPR005764">
    <property type="entry name" value="Ade_phspho_trans"/>
</dbReference>
<dbReference type="InterPro" id="IPR000836">
    <property type="entry name" value="PRibTrfase_dom"/>
</dbReference>
<dbReference type="InterPro" id="IPR029057">
    <property type="entry name" value="PRTase-like"/>
</dbReference>
<dbReference type="InterPro" id="IPR050054">
    <property type="entry name" value="UPRTase/APRTase"/>
</dbReference>
<dbReference type="NCBIfam" id="NF002636">
    <property type="entry name" value="PRK02304.1-5"/>
    <property type="match status" value="1"/>
</dbReference>
<dbReference type="PANTHER" id="PTHR32315">
    <property type="entry name" value="ADENINE PHOSPHORIBOSYLTRANSFERASE"/>
    <property type="match status" value="1"/>
</dbReference>
<dbReference type="PANTHER" id="PTHR32315:SF3">
    <property type="entry name" value="ADENINE PHOSPHORIBOSYLTRANSFERASE"/>
    <property type="match status" value="1"/>
</dbReference>
<dbReference type="Pfam" id="PF00156">
    <property type="entry name" value="Pribosyltran"/>
    <property type="match status" value="1"/>
</dbReference>
<dbReference type="SUPFAM" id="SSF53271">
    <property type="entry name" value="PRTase-like"/>
    <property type="match status" value="1"/>
</dbReference>
<dbReference type="PROSITE" id="PS00103">
    <property type="entry name" value="PUR_PYR_PR_TRANSFER"/>
    <property type="match status" value="1"/>
</dbReference>
<sequence>MKQHPLAQYLEAVPDFPKEGILFQDISPLLRDHFVATIDAMSLLFSAKEWAEVDYLVGVESRGFIFASALALKHDKGFVKVRKPGKLPNVHASMEYGLEYGTDKLEMQKGNGKKVIICDDLIATGGSMQAAAKLCNEVGYEVVGMACLVDLKALNSFSHDGMTVRSVIQFDD</sequence>
<name>APT_HYDCU</name>
<organism>
    <name type="scientific">Hydrogenovibrio crunogenus (strain DSM 25203 / XCL-2)</name>
    <name type="common">Thiomicrospira crunogena</name>
    <dbReference type="NCBI Taxonomy" id="317025"/>
    <lineage>
        <taxon>Bacteria</taxon>
        <taxon>Pseudomonadati</taxon>
        <taxon>Pseudomonadota</taxon>
        <taxon>Gammaproteobacteria</taxon>
        <taxon>Thiotrichales</taxon>
        <taxon>Piscirickettsiaceae</taxon>
        <taxon>Hydrogenovibrio</taxon>
    </lineage>
</organism>
<evidence type="ECO:0000255" key="1">
    <source>
        <dbReference type="HAMAP-Rule" id="MF_00004"/>
    </source>
</evidence>
<evidence type="ECO:0000305" key="2"/>
<keyword id="KW-0963">Cytoplasm</keyword>
<keyword id="KW-0328">Glycosyltransferase</keyword>
<keyword id="KW-0660">Purine salvage</keyword>
<keyword id="KW-0808">Transferase</keyword>
<gene>
    <name evidence="1" type="primary">apt</name>
    <name type="ordered locus">Tcr_0108</name>
</gene>
<comment type="function">
    <text evidence="1">Catalyzes a salvage reaction resulting in the formation of AMP, that is energically less costly than de novo synthesis.</text>
</comment>
<comment type="catalytic activity">
    <reaction evidence="1">
        <text>AMP + diphosphate = 5-phospho-alpha-D-ribose 1-diphosphate + adenine</text>
        <dbReference type="Rhea" id="RHEA:16609"/>
        <dbReference type="ChEBI" id="CHEBI:16708"/>
        <dbReference type="ChEBI" id="CHEBI:33019"/>
        <dbReference type="ChEBI" id="CHEBI:58017"/>
        <dbReference type="ChEBI" id="CHEBI:456215"/>
        <dbReference type="EC" id="2.4.2.7"/>
    </reaction>
</comment>
<comment type="pathway">
    <text evidence="1">Purine metabolism; AMP biosynthesis via salvage pathway; AMP from adenine: step 1/1.</text>
</comment>
<comment type="subunit">
    <text evidence="1">Homodimer.</text>
</comment>
<comment type="subcellular location">
    <subcellularLocation>
        <location evidence="1">Cytoplasm</location>
    </subcellularLocation>
</comment>
<comment type="similarity">
    <text evidence="1">Belongs to the purine/pyrimidine phosphoribosyltransferase family.</text>
</comment>
<comment type="sequence caution" evidence="2">
    <conflict type="erroneous initiation">
        <sequence resource="EMBL-CDS" id="ABB40704"/>
    </conflict>
</comment>
<feature type="chain" id="PRO_0000321419" description="Adenine phosphoribosyltransferase">
    <location>
        <begin position="1"/>
        <end position="172"/>
    </location>
</feature>
<reference key="1">
    <citation type="journal article" date="2006" name="PLoS Biol.">
        <title>The genome of deep-sea vent chemolithoautotroph Thiomicrospira crunogena XCL-2.</title>
        <authorList>
            <person name="Scott K.M."/>
            <person name="Sievert S.M."/>
            <person name="Abril F.N."/>
            <person name="Ball L.A."/>
            <person name="Barrett C.J."/>
            <person name="Blake R.A."/>
            <person name="Boller A.J."/>
            <person name="Chain P.S.G."/>
            <person name="Clark J.A."/>
            <person name="Davis C.R."/>
            <person name="Detter C."/>
            <person name="Do K.F."/>
            <person name="Dobrinski K.P."/>
            <person name="Faza B.I."/>
            <person name="Fitzpatrick K.A."/>
            <person name="Freyermuth S.K."/>
            <person name="Harmer T.L."/>
            <person name="Hauser L.J."/>
            <person name="Huegler M."/>
            <person name="Kerfeld C.A."/>
            <person name="Klotz M.G."/>
            <person name="Kong W.W."/>
            <person name="Land M."/>
            <person name="Lapidus A."/>
            <person name="Larimer F.W."/>
            <person name="Longo D.L."/>
            <person name="Lucas S."/>
            <person name="Malfatti S.A."/>
            <person name="Massey S.E."/>
            <person name="Martin D.D."/>
            <person name="McCuddin Z."/>
            <person name="Meyer F."/>
            <person name="Moore J.L."/>
            <person name="Ocampo L.H. Jr."/>
            <person name="Paul J.H."/>
            <person name="Paulsen I.T."/>
            <person name="Reep D.K."/>
            <person name="Ren Q."/>
            <person name="Ross R.L."/>
            <person name="Sato P.Y."/>
            <person name="Thomas P."/>
            <person name="Tinkham L.E."/>
            <person name="Zeruth G.T."/>
        </authorList>
    </citation>
    <scope>NUCLEOTIDE SEQUENCE [LARGE SCALE GENOMIC DNA]</scope>
    <source>
        <strain>DSM 25203 / XCL-2</strain>
    </source>
</reference>
<accession>Q31JG9</accession>
<protein>
    <recommendedName>
        <fullName evidence="1">Adenine phosphoribosyltransferase</fullName>
        <shortName evidence="1">APRT</shortName>
        <ecNumber evidence="1">2.4.2.7</ecNumber>
    </recommendedName>
</protein>